<reference key="1">
    <citation type="journal article" date="1997" name="J. Clin. Endocrinol. Metab.">
        <title>Pit-1/growth hormone factor 1 splice variant expression in the rhesus monkey pituitary gland and the rhesus and human placenta.</title>
        <authorList>
            <person name="Schanke J.T."/>
            <person name="Conwell C.M."/>
            <person name="Durning M."/>
            <person name="Fisher J.M."/>
            <person name="Golos T.G."/>
        </authorList>
    </citation>
    <scope>NUCLEOTIDE SEQUENCE [MRNA]</scope>
    <source>
        <tissue>Pituitary</tissue>
    </source>
</reference>
<proteinExistence type="evidence at transcript level"/>
<comment type="function">
    <text evidence="1">Transcription factor involved in the specification of the lactotrope, somatotrope, and thyrotrope phenotypes in the developing anterior pituitary. Activates growth hormone and prolactin genes. Specifically binds to the consensus sequence 5'-TAAAT-3'.</text>
</comment>
<comment type="subunit">
    <text evidence="1">Interacts with PITX1. Interacts with LHX3. Interacts with ELK1.</text>
</comment>
<comment type="subcellular location">
    <subcellularLocation>
        <location evidence="1">Nucleus</location>
    </subcellularLocation>
</comment>
<comment type="alternative products">
    <event type="alternative splicing"/>
    <isoform>
        <id>Q28503-1</id>
        <name>B</name>
        <name>PIT-1B</name>
        <name>GHF-1</name>
        <sequence type="displayed"/>
    </isoform>
    <isoform>
        <id>Q28503-2</id>
        <name>A</name>
        <name>PIT-1A</name>
        <name>GHF-2</name>
        <sequence type="described" ref="VSP_002315"/>
    </isoform>
</comment>
<comment type="domain">
    <text evidence="1">The 9aaTAD motif is a transactivation domain present in a large number of yeast and animal transcription factors.</text>
</comment>
<comment type="miscellaneous">
    <molecule>Isoform A</molecule>
    <text evidence="4">Altered in its ability to trans-activate compared to isoform B.</text>
</comment>
<comment type="similarity">
    <text evidence="4">Belongs to the POU transcription factor family. Class-1 subfamily.</text>
</comment>
<organism>
    <name type="scientific">Macaca mulatta</name>
    <name type="common">Rhesus macaque</name>
    <dbReference type="NCBI Taxonomy" id="9544"/>
    <lineage>
        <taxon>Eukaryota</taxon>
        <taxon>Metazoa</taxon>
        <taxon>Chordata</taxon>
        <taxon>Craniata</taxon>
        <taxon>Vertebrata</taxon>
        <taxon>Euteleostomi</taxon>
        <taxon>Mammalia</taxon>
        <taxon>Eutheria</taxon>
        <taxon>Euarchontoglires</taxon>
        <taxon>Primates</taxon>
        <taxon>Haplorrhini</taxon>
        <taxon>Catarrhini</taxon>
        <taxon>Cercopithecidae</taxon>
        <taxon>Cercopithecinae</taxon>
        <taxon>Macaca</taxon>
    </lineage>
</organism>
<protein>
    <recommendedName>
        <fullName>Pituitary-specific positive transcription factor 1</fullName>
        <shortName>PIT-1</shortName>
    </recommendedName>
    <alternativeName>
        <fullName>Growth hormone factor 1</fullName>
        <shortName>GHF-1</shortName>
    </alternativeName>
</protein>
<feature type="chain" id="PRO_0000100698" description="Pituitary-specific positive transcription factor 1">
    <location>
        <begin position="1"/>
        <end position="291"/>
    </location>
</feature>
<feature type="domain" description="POU-specific" evidence="3">
    <location>
        <begin position="124"/>
        <end position="198"/>
    </location>
</feature>
<feature type="DNA-binding region" description="Homeobox" evidence="2">
    <location>
        <begin position="214"/>
        <end position="273"/>
    </location>
</feature>
<feature type="short sequence motif" description="9aaTAD" evidence="1">
    <location>
        <begin position="5"/>
        <end position="13"/>
    </location>
</feature>
<feature type="splice variant" id="VSP_002315" description="In isoform A." evidence="4">
    <original>T</original>
    <variation>TVPSILSLIQTPKCLCTHFLVTTLGNT</variation>
    <location>
        <position position="47"/>
    </location>
</feature>
<name>PIT1_MACMU</name>
<sequence>MSCQAFTSADTFIPLNSDASATLPLIMHHSAAECLPVSNHATNVMSTATGLHYSVPSCHYGNQPSTYGVMAGSLTLVFYKFPDHTLSHGFPPIHQPLLAEDPTAADFKQELRRKSKLVEEPIDMDSPEIRELEKFANEFKVRRIKLGYTQTNVGEALAAVHGSEFSQTTICRFENLQLSFKNACKLKAILSKWLEEAEQVGALYNEKVGANERKRKRRTTISIAAKDALERHFGEQNKPSSQEIMRMAEELNLEKEVVRVWFCNRRQREKRVKTSLNQSLFSISKEHLECR</sequence>
<accession>Q28503</accession>
<evidence type="ECO:0000250" key="1">
    <source>
        <dbReference type="UniProtKB" id="P28069"/>
    </source>
</evidence>
<evidence type="ECO:0000255" key="2">
    <source>
        <dbReference type="PROSITE-ProRule" id="PRU00108"/>
    </source>
</evidence>
<evidence type="ECO:0000255" key="3">
    <source>
        <dbReference type="PROSITE-ProRule" id="PRU00530"/>
    </source>
</evidence>
<evidence type="ECO:0000305" key="4"/>
<gene>
    <name type="primary">POU1F1</name>
    <name type="synonym">GHF1</name>
    <name type="synonym">PIT1</name>
</gene>
<keyword id="KW-0010">Activator</keyword>
<keyword id="KW-0025">Alternative splicing</keyword>
<keyword id="KW-0238">DNA-binding</keyword>
<keyword id="KW-0371">Homeobox</keyword>
<keyword id="KW-0539">Nucleus</keyword>
<keyword id="KW-1185">Reference proteome</keyword>
<keyword id="KW-0804">Transcription</keyword>
<keyword id="KW-0805">Transcription regulation</keyword>
<dbReference type="EMBL" id="U53566">
    <property type="protein sequence ID" value="AAB51352.1"/>
    <property type="molecule type" value="mRNA"/>
</dbReference>
<dbReference type="RefSeq" id="NP_001036325.1">
    <molecule id="Q28503-2"/>
    <property type="nucleotide sequence ID" value="NM_001042860.1"/>
</dbReference>
<dbReference type="SMR" id="Q28503"/>
<dbReference type="FunCoup" id="Q28503">
    <property type="interactions" value="332"/>
</dbReference>
<dbReference type="STRING" id="9544.ENSMMUP00000021350"/>
<dbReference type="PaxDb" id="9544-ENSMMUP00000021350"/>
<dbReference type="GeneID" id="719349"/>
<dbReference type="KEGG" id="mcc:719349"/>
<dbReference type="CTD" id="5449"/>
<dbReference type="eggNOG" id="KOG3802">
    <property type="taxonomic scope" value="Eukaryota"/>
</dbReference>
<dbReference type="InParanoid" id="Q28503"/>
<dbReference type="OrthoDB" id="6358449at2759"/>
<dbReference type="Proteomes" id="UP000006718">
    <property type="component" value="Unassembled WGS sequence"/>
</dbReference>
<dbReference type="GO" id="GO:0005634">
    <property type="term" value="C:nucleus"/>
    <property type="evidence" value="ECO:0000250"/>
    <property type="project" value="UniProtKB"/>
</dbReference>
<dbReference type="GO" id="GO:0000981">
    <property type="term" value="F:DNA-binding transcription factor activity, RNA polymerase II-specific"/>
    <property type="evidence" value="ECO:0000250"/>
    <property type="project" value="UniProtKB"/>
</dbReference>
<dbReference type="GO" id="GO:0000978">
    <property type="term" value="F:RNA polymerase II cis-regulatory region sequence-specific DNA binding"/>
    <property type="evidence" value="ECO:0000318"/>
    <property type="project" value="GO_Central"/>
</dbReference>
<dbReference type="GO" id="GO:0045944">
    <property type="term" value="P:positive regulation of transcription by RNA polymerase II"/>
    <property type="evidence" value="ECO:0000250"/>
    <property type="project" value="UniProtKB"/>
</dbReference>
<dbReference type="GO" id="GO:0006357">
    <property type="term" value="P:regulation of transcription by RNA polymerase II"/>
    <property type="evidence" value="ECO:0000318"/>
    <property type="project" value="GO_Central"/>
</dbReference>
<dbReference type="CDD" id="cd00086">
    <property type="entry name" value="homeodomain"/>
    <property type="match status" value="1"/>
</dbReference>
<dbReference type="FunFam" id="1.10.10.60:FF:000150">
    <property type="entry name" value="POU domain protein"/>
    <property type="match status" value="1"/>
</dbReference>
<dbReference type="FunFam" id="1.10.260.40:FF:000007">
    <property type="entry name" value="POU domain protein"/>
    <property type="match status" value="1"/>
</dbReference>
<dbReference type="Gene3D" id="1.10.10.60">
    <property type="entry name" value="Homeodomain-like"/>
    <property type="match status" value="1"/>
</dbReference>
<dbReference type="Gene3D" id="1.10.260.40">
    <property type="entry name" value="lambda repressor-like DNA-binding domains"/>
    <property type="match status" value="1"/>
</dbReference>
<dbReference type="InterPro" id="IPR001356">
    <property type="entry name" value="HD"/>
</dbReference>
<dbReference type="InterPro" id="IPR017970">
    <property type="entry name" value="Homeobox_CS"/>
</dbReference>
<dbReference type="InterPro" id="IPR009057">
    <property type="entry name" value="Homeodomain-like_sf"/>
</dbReference>
<dbReference type="InterPro" id="IPR010982">
    <property type="entry name" value="Lambda_DNA-bd_dom_sf"/>
</dbReference>
<dbReference type="InterPro" id="IPR013847">
    <property type="entry name" value="POU"/>
</dbReference>
<dbReference type="InterPro" id="IPR000327">
    <property type="entry name" value="POU_dom"/>
</dbReference>
<dbReference type="InterPro" id="IPR050255">
    <property type="entry name" value="POU_domain_TF"/>
</dbReference>
<dbReference type="PANTHER" id="PTHR11636:SF84">
    <property type="entry name" value="NETRIN-1-RELATED"/>
    <property type="match status" value="1"/>
</dbReference>
<dbReference type="PANTHER" id="PTHR11636">
    <property type="entry name" value="POU DOMAIN"/>
    <property type="match status" value="1"/>
</dbReference>
<dbReference type="Pfam" id="PF00046">
    <property type="entry name" value="Homeodomain"/>
    <property type="match status" value="1"/>
</dbReference>
<dbReference type="Pfam" id="PF00157">
    <property type="entry name" value="Pou"/>
    <property type="match status" value="1"/>
</dbReference>
<dbReference type="PRINTS" id="PR00028">
    <property type="entry name" value="POUDOMAIN"/>
</dbReference>
<dbReference type="SMART" id="SM00389">
    <property type="entry name" value="HOX"/>
    <property type="match status" value="1"/>
</dbReference>
<dbReference type="SMART" id="SM00352">
    <property type="entry name" value="POU"/>
    <property type="match status" value="1"/>
</dbReference>
<dbReference type="SUPFAM" id="SSF46689">
    <property type="entry name" value="Homeodomain-like"/>
    <property type="match status" value="1"/>
</dbReference>
<dbReference type="SUPFAM" id="SSF47413">
    <property type="entry name" value="lambda repressor-like DNA-binding domains"/>
    <property type="match status" value="1"/>
</dbReference>
<dbReference type="PROSITE" id="PS00027">
    <property type="entry name" value="HOMEOBOX_1"/>
    <property type="match status" value="1"/>
</dbReference>
<dbReference type="PROSITE" id="PS50071">
    <property type="entry name" value="HOMEOBOX_2"/>
    <property type="match status" value="1"/>
</dbReference>
<dbReference type="PROSITE" id="PS00035">
    <property type="entry name" value="POU_1"/>
    <property type="match status" value="1"/>
</dbReference>
<dbReference type="PROSITE" id="PS00465">
    <property type="entry name" value="POU_2"/>
    <property type="match status" value="1"/>
</dbReference>
<dbReference type="PROSITE" id="PS51179">
    <property type="entry name" value="POU_3"/>
    <property type="match status" value="1"/>
</dbReference>